<keyword id="KW-0961">Cell wall biogenesis/degradation</keyword>
<keyword id="KW-0328">Glycosyltransferase</keyword>
<keyword id="KW-0333">Golgi apparatus</keyword>
<keyword id="KW-0472">Membrane</keyword>
<keyword id="KW-1185">Reference proteome</keyword>
<keyword id="KW-0808">Transferase</keyword>
<keyword id="KW-0812">Transmembrane</keyword>
<keyword id="KW-1133">Transmembrane helix</keyword>
<reference key="1">
    <citation type="journal article" date="2002" name="Plant Physiol.">
        <title>Cellulose synthase-like genes of rice.</title>
        <authorList>
            <person name="Hazen S.P."/>
            <person name="Scott-Craig J.S."/>
            <person name="Walton J.D."/>
        </authorList>
    </citation>
    <scope>NUCLEOTIDE SEQUENCE [GENOMIC DNA]</scope>
</reference>
<reference key="2">
    <citation type="journal article" date="2005" name="Nature">
        <title>The map-based sequence of the rice genome.</title>
        <authorList>
            <consortium name="International rice genome sequencing project (IRGSP)"/>
        </authorList>
    </citation>
    <scope>NUCLEOTIDE SEQUENCE [LARGE SCALE GENOMIC DNA]</scope>
    <source>
        <strain>cv. Nipponbare</strain>
    </source>
</reference>
<reference key="3">
    <citation type="journal article" date="2008" name="Nucleic Acids Res.">
        <title>The rice annotation project database (RAP-DB): 2008 update.</title>
        <authorList>
            <consortium name="The rice annotation project (RAP)"/>
        </authorList>
    </citation>
    <scope>GENOME REANNOTATION</scope>
    <source>
        <strain>cv. Nipponbare</strain>
    </source>
</reference>
<reference key="4">
    <citation type="journal article" date="2013" name="Rice">
        <title>Improvement of the Oryza sativa Nipponbare reference genome using next generation sequence and optical map data.</title>
        <authorList>
            <person name="Kawahara Y."/>
            <person name="de la Bastide M."/>
            <person name="Hamilton J.P."/>
            <person name="Kanamori H."/>
            <person name="McCombie W.R."/>
            <person name="Ouyang S."/>
            <person name="Schwartz D.C."/>
            <person name="Tanaka T."/>
            <person name="Wu J."/>
            <person name="Zhou S."/>
            <person name="Childs K.L."/>
            <person name="Davidson R.M."/>
            <person name="Lin H."/>
            <person name="Quesada-Ocampo L."/>
            <person name="Vaillancourt B."/>
            <person name="Sakai H."/>
            <person name="Lee S.S."/>
            <person name="Kim J."/>
            <person name="Numa H."/>
            <person name="Itoh T."/>
            <person name="Buell C.R."/>
            <person name="Matsumoto T."/>
        </authorList>
    </citation>
    <scope>GENOME REANNOTATION</scope>
    <source>
        <strain>cv. Nipponbare</strain>
    </source>
</reference>
<reference key="5">
    <citation type="journal article" date="2005" name="PLoS Biol.">
        <title>The genomes of Oryza sativa: a history of duplications.</title>
        <authorList>
            <person name="Yu J."/>
            <person name="Wang J."/>
            <person name="Lin W."/>
            <person name="Li S."/>
            <person name="Li H."/>
            <person name="Zhou J."/>
            <person name="Ni P."/>
            <person name="Dong W."/>
            <person name="Hu S."/>
            <person name="Zeng C."/>
            <person name="Zhang J."/>
            <person name="Zhang Y."/>
            <person name="Li R."/>
            <person name="Xu Z."/>
            <person name="Li S."/>
            <person name="Li X."/>
            <person name="Zheng H."/>
            <person name="Cong L."/>
            <person name="Lin L."/>
            <person name="Yin J."/>
            <person name="Geng J."/>
            <person name="Li G."/>
            <person name="Shi J."/>
            <person name="Liu J."/>
            <person name="Lv H."/>
            <person name="Li J."/>
            <person name="Wang J."/>
            <person name="Deng Y."/>
            <person name="Ran L."/>
            <person name="Shi X."/>
            <person name="Wang X."/>
            <person name="Wu Q."/>
            <person name="Li C."/>
            <person name="Ren X."/>
            <person name="Wang J."/>
            <person name="Wang X."/>
            <person name="Li D."/>
            <person name="Liu D."/>
            <person name="Zhang X."/>
            <person name="Ji Z."/>
            <person name="Zhao W."/>
            <person name="Sun Y."/>
            <person name="Zhang Z."/>
            <person name="Bao J."/>
            <person name="Han Y."/>
            <person name="Dong L."/>
            <person name="Ji J."/>
            <person name="Chen P."/>
            <person name="Wu S."/>
            <person name="Liu J."/>
            <person name="Xiao Y."/>
            <person name="Bu D."/>
            <person name="Tan J."/>
            <person name="Yang L."/>
            <person name="Ye C."/>
            <person name="Zhang J."/>
            <person name="Xu J."/>
            <person name="Zhou Y."/>
            <person name="Yu Y."/>
            <person name="Zhang B."/>
            <person name="Zhuang S."/>
            <person name="Wei H."/>
            <person name="Liu B."/>
            <person name="Lei M."/>
            <person name="Yu H."/>
            <person name="Li Y."/>
            <person name="Xu H."/>
            <person name="Wei S."/>
            <person name="He X."/>
            <person name="Fang L."/>
            <person name="Zhang Z."/>
            <person name="Zhang Y."/>
            <person name="Huang X."/>
            <person name="Su Z."/>
            <person name="Tong W."/>
            <person name="Li J."/>
            <person name="Tong Z."/>
            <person name="Li S."/>
            <person name="Ye J."/>
            <person name="Wang L."/>
            <person name="Fang L."/>
            <person name="Lei T."/>
            <person name="Chen C.-S."/>
            <person name="Chen H.-C."/>
            <person name="Xu Z."/>
            <person name="Li H."/>
            <person name="Huang H."/>
            <person name="Zhang F."/>
            <person name="Xu H."/>
            <person name="Li N."/>
            <person name="Zhao C."/>
            <person name="Li S."/>
            <person name="Dong L."/>
            <person name="Huang Y."/>
            <person name="Li L."/>
            <person name="Xi Y."/>
            <person name="Qi Q."/>
            <person name="Li W."/>
            <person name="Zhang B."/>
            <person name="Hu W."/>
            <person name="Zhang Y."/>
            <person name="Tian X."/>
            <person name="Jiao Y."/>
            <person name="Liang X."/>
            <person name="Jin J."/>
            <person name="Gao L."/>
            <person name="Zheng W."/>
            <person name="Hao B."/>
            <person name="Liu S.-M."/>
            <person name="Wang W."/>
            <person name="Yuan L."/>
            <person name="Cao M."/>
            <person name="McDermott J."/>
            <person name="Samudrala R."/>
            <person name="Wang J."/>
            <person name="Wong G.K.-S."/>
            <person name="Yang H."/>
        </authorList>
    </citation>
    <scope>NUCLEOTIDE SEQUENCE [LARGE SCALE GENOMIC DNA]</scope>
    <source>
        <strain>cv. Nipponbare</strain>
    </source>
</reference>
<protein>
    <recommendedName>
        <fullName>Probable mixed-linked glucan synthase 3</fullName>
        <ecNumber>2.4.1.-</ecNumber>
    </recommendedName>
    <alternativeName>
        <fullName>1,3;1,4-beta-D-glucan synthase 3</fullName>
    </alternativeName>
    <alternativeName>
        <fullName>Cellulose synthase-like protein F3</fullName>
    </alternativeName>
    <alternativeName>
        <fullName>OsCslF3</fullName>
    </alternativeName>
</protein>
<evidence type="ECO:0000250" key="1"/>
<evidence type="ECO:0000255" key="2"/>
<evidence type="ECO:0000256" key="3">
    <source>
        <dbReference type="SAM" id="MobiDB-lite"/>
    </source>
</evidence>
<evidence type="ECO:0000305" key="4"/>
<organism>
    <name type="scientific">Oryza sativa subsp. japonica</name>
    <name type="common">Rice</name>
    <dbReference type="NCBI Taxonomy" id="39947"/>
    <lineage>
        <taxon>Eukaryota</taxon>
        <taxon>Viridiplantae</taxon>
        <taxon>Streptophyta</taxon>
        <taxon>Embryophyta</taxon>
        <taxon>Tracheophyta</taxon>
        <taxon>Spermatophyta</taxon>
        <taxon>Magnoliopsida</taxon>
        <taxon>Liliopsida</taxon>
        <taxon>Poales</taxon>
        <taxon>Poaceae</taxon>
        <taxon>BOP clade</taxon>
        <taxon>Oryzoideae</taxon>
        <taxon>Oryzeae</taxon>
        <taxon>Oryzinae</taxon>
        <taxon>Oryza</taxon>
        <taxon>Oryza sativa</taxon>
    </lineage>
</organism>
<comment type="function">
    <text evidence="1">May catalyze both beta-1,3 and beta-1,4 glycosidic linkage on beta-D-glucan. Essential for (1,3;1,4)-beta-D-glucans synthesis in grasses and cereals (Poaceae). The mixed-linked glucans (which are not present in walls of dicotyledons or most other monocotyledonous plants) are particularly important constituents of the walls of the starchy endosperm and aleurone cells of cereal grains such as oats, wheat, rice and barley. They can account for up to 70% by weight of the wall (By similarity).</text>
</comment>
<comment type="subcellular location">
    <subcellularLocation>
        <location evidence="4">Golgi apparatus membrane</location>
        <topology evidence="4">Multi-pass membrane protein</topology>
    </subcellularLocation>
</comment>
<comment type="similarity">
    <text evidence="4">Belongs to the glycosyltransferase 2 family. Plant cellulose synthase-like F subfamily.</text>
</comment>
<accession>Q6ZF85</accession>
<accession>Q0D5L1</accession>
<accession>Q944E0</accession>
<proteinExistence type="inferred from homology"/>
<feature type="chain" id="PRO_0000319404" description="Probable mixed-linked glucan synthase 3">
    <location>
        <begin position="1"/>
        <end position="868"/>
    </location>
</feature>
<feature type="transmembrane region" description="Helical" evidence="2">
    <location>
        <begin position="86"/>
        <end position="106"/>
    </location>
</feature>
<feature type="transmembrane region" description="Helical" evidence="2">
    <location>
        <begin position="116"/>
        <end position="136"/>
    </location>
</feature>
<feature type="transmembrane region" description="Helical" evidence="2">
    <location>
        <begin position="649"/>
        <end position="669"/>
    </location>
</feature>
<feature type="transmembrane region" description="Helical" evidence="2">
    <location>
        <begin position="686"/>
        <end position="706"/>
    </location>
</feature>
<feature type="transmembrane region" description="Helical" evidence="2">
    <location>
        <begin position="717"/>
        <end position="737"/>
    </location>
</feature>
<feature type="transmembrane region" description="Helical" evidence="2">
    <location>
        <begin position="771"/>
        <end position="791"/>
    </location>
</feature>
<feature type="transmembrane region" description="Helical" evidence="2">
    <location>
        <begin position="810"/>
        <end position="830"/>
    </location>
</feature>
<feature type="transmembrane region" description="Helical" evidence="2">
    <location>
        <begin position="838"/>
        <end position="858"/>
    </location>
</feature>
<feature type="region of interest" description="Disordered" evidence="3">
    <location>
        <begin position="36"/>
        <end position="68"/>
    </location>
</feature>
<feature type="compositionally biased region" description="Basic and acidic residues" evidence="3">
    <location>
        <begin position="53"/>
        <end position="68"/>
    </location>
</feature>
<feature type="active site" evidence="2">
    <location>
        <position position="211"/>
    </location>
</feature>
<feature type="active site" evidence="2">
    <location>
        <position position="573"/>
    </location>
</feature>
<feature type="binding site" evidence="2">
    <location>
        <position position="412"/>
    </location>
    <ligand>
        <name>substrate</name>
    </ligand>
</feature>
<feature type="binding site" evidence="2">
    <location>
        <position position="414"/>
    </location>
    <ligand>
        <name>substrate</name>
    </ligand>
</feature>
<dbReference type="EC" id="2.4.1.-"/>
<dbReference type="EMBL" id="AF432504">
    <property type="protein sequence ID" value="AAL25133.1"/>
    <property type="molecule type" value="Genomic_DNA"/>
</dbReference>
<dbReference type="EMBL" id="AP004261">
    <property type="protein sequence ID" value="BAC83322.1"/>
    <property type="molecule type" value="Genomic_DNA"/>
</dbReference>
<dbReference type="EMBL" id="AP008213">
    <property type="protein sequence ID" value="BAF21862.2"/>
    <property type="molecule type" value="Genomic_DNA"/>
</dbReference>
<dbReference type="EMBL" id="AP014963">
    <property type="status" value="NOT_ANNOTATED_CDS"/>
    <property type="molecule type" value="Genomic_DNA"/>
</dbReference>
<dbReference type="EMBL" id="CM000144">
    <property type="protein sequence ID" value="EAZ40241.1"/>
    <property type="molecule type" value="Genomic_DNA"/>
</dbReference>
<dbReference type="RefSeq" id="XP_015645457.1">
    <property type="nucleotide sequence ID" value="XM_015789971.1"/>
</dbReference>
<dbReference type="SMR" id="Q6ZF85"/>
<dbReference type="FunCoup" id="Q6ZF85">
    <property type="interactions" value="9"/>
</dbReference>
<dbReference type="STRING" id="39947.Q6ZF85"/>
<dbReference type="CAZy" id="GT2">
    <property type="family name" value="Glycosyltransferase Family 2"/>
</dbReference>
<dbReference type="PaxDb" id="39947-Q6ZF85"/>
<dbReference type="EnsemblPlants" id="Os07t0553400-01">
    <property type="protein sequence ID" value="Os07t0553400-01"/>
    <property type="gene ID" value="Os07g0553400"/>
</dbReference>
<dbReference type="Gramene" id="Os07t0553400-01">
    <property type="protein sequence ID" value="Os07t0553400-01"/>
    <property type="gene ID" value="Os07g0553400"/>
</dbReference>
<dbReference type="KEGG" id="dosa:Os07g0553400"/>
<dbReference type="InParanoid" id="Q6ZF85"/>
<dbReference type="OrthoDB" id="72851at2759"/>
<dbReference type="Proteomes" id="UP000000763">
    <property type="component" value="Chromosome 7"/>
</dbReference>
<dbReference type="Proteomes" id="UP000007752">
    <property type="component" value="Chromosome 7"/>
</dbReference>
<dbReference type="Proteomes" id="UP000059680">
    <property type="component" value="Chromosome 7"/>
</dbReference>
<dbReference type="GO" id="GO:0000139">
    <property type="term" value="C:Golgi membrane"/>
    <property type="evidence" value="ECO:0007669"/>
    <property type="project" value="UniProtKB-SubCell"/>
</dbReference>
<dbReference type="GO" id="GO:0005886">
    <property type="term" value="C:plasma membrane"/>
    <property type="evidence" value="ECO:0000318"/>
    <property type="project" value="GO_Central"/>
</dbReference>
<dbReference type="GO" id="GO:0016760">
    <property type="term" value="F:cellulose synthase (UDP-forming) activity"/>
    <property type="evidence" value="ECO:0007669"/>
    <property type="project" value="InterPro"/>
</dbReference>
<dbReference type="GO" id="GO:0071555">
    <property type="term" value="P:cell wall organization"/>
    <property type="evidence" value="ECO:0007669"/>
    <property type="project" value="UniProtKB-KW"/>
</dbReference>
<dbReference type="GO" id="GO:0030244">
    <property type="term" value="P:cellulose biosynthetic process"/>
    <property type="evidence" value="ECO:0007669"/>
    <property type="project" value="InterPro"/>
</dbReference>
<dbReference type="GO" id="GO:0009833">
    <property type="term" value="P:plant-type primary cell wall biogenesis"/>
    <property type="evidence" value="ECO:0000318"/>
    <property type="project" value="GO_Central"/>
</dbReference>
<dbReference type="FunFam" id="3.90.550.10:FF:000027">
    <property type="entry name" value="Cellulose synthase-like protein D4"/>
    <property type="match status" value="1"/>
</dbReference>
<dbReference type="Gene3D" id="3.90.550.10">
    <property type="entry name" value="Spore Coat Polysaccharide Biosynthesis Protein SpsA, Chain A"/>
    <property type="match status" value="1"/>
</dbReference>
<dbReference type="InterPro" id="IPR005150">
    <property type="entry name" value="Cellulose_synth"/>
</dbReference>
<dbReference type="InterPro" id="IPR029044">
    <property type="entry name" value="Nucleotide-diphossugar_trans"/>
</dbReference>
<dbReference type="PANTHER" id="PTHR13301">
    <property type="entry name" value="X-BOX TRANSCRIPTION FACTOR-RELATED"/>
    <property type="match status" value="1"/>
</dbReference>
<dbReference type="Pfam" id="PF03552">
    <property type="entry name" value="Cellulose_synt"/>
    <property type="match status" value="2"/>
</dbReference>
<dbReference type="SUPFAM" id="SSF53448">
    <property type="entry name" value="Nucleotide-diphospho-sugar transferases"/>
    <property type="match status" value="1"/>
</dbReference>
<name>CSLF3_ORYSJ</name>
<gene>
    <name type="primary">CSLF3</name>
    <name type="ordered locus">Os07g0553400</name>
    <name type="ordered locus">LOC_Os07g36750</name>
    <name type="ORF">OsJ_023724</name>
    <name type="ORF">P0013G11.12</name>
</gene>
<sequence length="868" mass="97689">MASPASVAGGGEDSNGCSSLIDPLLVSRTSSIGGAERKAAGGGGGGAKGKHWAAADKGERRAAKECGGEDGRRPLLFRSYRVKGSLLHPYRALIFARLIAVLLFFGWRIRHNNSDIMWFWTMSVAGDVWFGFSWLLNQLPKFNPVKTIPDLTALRQYCDLADGSYRLPGIDVFVTTADPIDEPVLYTMNCVLSILAADYPVDRSACYLSDDSGALILYEALVETAKFATLWVPFCRKHCIEPRSPESYFELEAPSYTGSAPEEFKNDSRIVHLEYDEFKVRLEALPETIRKRSDVYNSMKTDQGAPNATWMANGTQWPGTWIEPIENHRKGHHAGIVKVVLDHPIRGHNLSLKDSTGNNLNFNATDVRIPMLVYVSRGKNPNYDHNKKAGALNAQLRASALLSNAQFIINFDCDHYINNSQAFRAAICFMLDQREGDNTAFVQFPQRFDNVDPKDRYGNHNRVFFDGTMLALNGLQGPSYLGTGCMFRRLALYGIDPPHWRQDNITPEASKFGNSILLLESVLEALNQDRFATPSPVNDIFVNELEMVVSASFDKETDWGKGVGYIYDIATEDIVTGFRIHGQGWRSMYCTMEHDAFCGTAPINLTERLHQIVRWSGGSLEMFFSHNNPLIGGRRLQPLQRVSYLNMTIYPVTSLFILLYAISPVMWLIPDEVYIQRPFTRYVVYLLVIILMIHMIGWLEIKWAGITWLDYWRNEQFFMIGSTSAYPTAVLHMVVNLLTKKGIHFRVTSKQTTADTNDKFADLYEMRWVPMLIPTMVVLVANIGAIGVAIGKTAVYMGVWTIAQKRHAAMGLLFNMWVMFLLYPFALAIMGRWAKRSIILVVLLPIIFVIVALVYVATHILLANIIPF</sequence>